<protein>
    <recommendedName>
        <fullName evidence="1">tRNA N6-adenosine threonylcarbamoyltransferase</fullName>
        <ecNumber evidence="1">2.3.1.234</ecNumber>
    </recommendedName>
    <alternativeName>
        <fullName evidence="1">N6-L-threonylcarbamoyladenine synthase</fullName>
        <shortName evidence="1">t(6)A synthase</shortName>
    </alternativeName>
    <alternativeName>
        <fullName evidence="1">t(6)A37 threonylcarbamoyladenosine biosynthesis protein TsaD</fullName>
    </alternativeName>
    <alternativeName>
        <fullName evidence="1">tRNA threonylcarbamoyladenosine biosynthesis protein TsaD</fullName>
    </alternativeName>
</protein>
<sequence>MLVLGIESSCDETGVAVYDSESGLLSHALHSQIATHRVHGGVVPELASRDHVNYLVPLVDEVLTKAQIRKNQLDGIAYTAGPGLIGALLVGSCFAKSLAYALNIPALAIHHLEAHLLAAKMETPSLDFPFIALLVSGGHCQLIEVNNIGEYRLLGDTLDDAVGEAFDKTAKLMGIPYPGGAVLANLADQCLSTPYQFPRPMTDRPGLDFSFSGLKTHALNTWNQSEKKESDRSEIAKAFQQAVVETLIIKCKRAIKESQSKRLVVAGGVGANKALRSALQKWIKDIKGEVYFPALEYCTDNGAMVAYAGCLRMMRGESDGGLGVMVKPRWPLA</sequence>
<accession>A5IEF9</accession>
<proteinExistence type="inferred from homology"/>
<name>TSAD_LEGPC</name>
<organism>
    <name type="scientific">Legionella pneumophila (strain Corby)</name>
    <dbReference type="NCBI Taxonomy" id="400673"/>
    <lineage>
        <taxon>Bacteria</taxon>
        <taxon>Pseudomonadati</taxon>
        <taxon>Pseudomonadota</taxon>
        <taxon>Gammaproteobacteria</taxon>
        <taxon>Legionellales</taxon>
        <taxon>Legionellaceae</taxon>
        <taxon>Legionella</taxon>
    </lineage>
</organism>
<evidence type="ECO:0000255" key="1">
    <source>
        <dbReference type="HAMAP-Rule" id="MF_01445"/>
    </source>
</evidence>
<dbReference type="EC" id="2.3.1.234" evidence="1"/>
<dbReference type="EMBL" id="CP000675">
    <property type="protein sequence ID" value="ABQ55759.1"/>
    <property type="molecule type" value="Genomic_DNA"/>
</dbReference>
<dbReference type="RefSeq" id="WP_011947201.1">
    <property type="nucleotide sequence ID" value="NC_009494.2"/>
</dbReference>
<dbReference type="SMR" id="A5IEF9"/>
<dbReference type="KEGG" id="lpc:LPC_1826"/>
<dbReference type="HOGENOM" id="CLU_023208_0_0_6"/>
<dbReference type="GO" id="GO:0005737">
    <property type="term" value="C:cytoplasm"/>
    <property type="evidence" value="ECO:0007669"/>
    <property type="project" value="UniProtKB-SubCell"/>
</dbReference>
<dbReference type="GO" id="GO:0005506">
    <property type="term" value="F:iron ion binding"/>
    <property type="evidence" value="ECO:0007669"/>
    <property type="project" value="UniProtKB-UniRule"/>
</dbReference>
<dbReference type="GO" id="GO:0061711">
    <property type="term" value="F:N(6)-L-threonylcarbamoyladenine synthase activity"/>
    <property type="evidence" value="ECO:0007669"/>
    <property type="project" value="UniProtKB-EC"/>
</dbReference>
<dbReference type="GO" id="GO:0002949">
    <property type="term" value="P:tRNA threonylcarbamoyladenosine modification"/>
    <property type="evidence" value="ECO:0007669"/>
    <property type="project" value="UniProtKB-UniRule"/>
</dbReference>
<dbReference type="CDD" id="cd24133">
    <property type="entry name" value="ASKHA_NBD_TsaD_bac"/>
    <property type="match status" value="1"/>
</dbReference>
<dbReference type="FunFam" id="3.30.420.40:FF:000012">
    <property type="entry name" value="tRNA N6-adenosine threonylcarbamoyltransferase"/>
    <property type="match status" value="1"/>
</dbReference>
<dbReference type="FunFam" id="3.30.420.40:FF:000040">
    <property type="entry name" value="tRNA N6-adenosine threonylcarbamoyltransferase"/>
    <property type="match status" value="1"/>
</dbReference>
<dbReference type="Gene3D" id="3.30.420.40">
    <property type="match status" value="2"/>
</dbReference>
<dbReference type="HAMAP" id="MF_01445">
    <property type="entry name" value="TsaD"/>
    <property type="match status" value="1"/>
</dbReference>
<dbReference type="InterPro" id="IPR043129">
    <property type="entry name" value="ATPase_NBD"/>
</dbReference>
<dbReference type="InterPro" id="IPR000905">
    <property type="entry name" value="Gcp-like_dom"/>
</dbReference>
<dbReference type="InterPro" id="IPR017861">
    <property type="entry name" value="KAE1/TsaD"/>
</dbReference>
<dbReference type="InterPro" id="IPR017860">
    <property type="entry name" value="Peptidase_M22_CS"/>
</dbReference>
<dbReference type="InterPro" id="IPR022450">
    <property type="entry name" value="TsaD"/>
</dbReference>
<dbReference type="NCBIfam" id="TIGR00329">
    <property type="entry name" value="gcp_kae1"/>
    <property type="match status" value="1"/>
</dbReference>
<dbReference type="NCBIfam" id="TIGR03723">
    <property type="entry name" value="T6A_TsaD_YgjD"/>
    <property type="match status" value="1"/>
</dbReference>
<dbReference type="PANTHER" id="PTHR11735">
    <property type="entry name" value="TRNA N6-ADENOSINE THREONYLCARBAMOYLTRANSFERASE"/>
    <property type="match status" value="1"/>
</dbReference>
<dbReference type="PANTHER" id="PTHR11735:SF6">
    <property type="entry name" value="TRNA N6-ADENOSINE THREONYLCARBAMOYLTRANSFERASE, MITOCHONDRIAL"/>
    <property type="match status" value="1"/>
</dbReference>
<dbReference type="Pfam" id="PF00814">
    <property type="entry name" value="TsaD"/>
    <property type="match status" value="1"/>
</dbReference>
<dbReference type="PRINTS" id="PR00789">
    <property type="entry name" value="OSIALOPTASE"/>
</dbReference>
<dbReference type="SUPFAM" id="SSF53067">
    <property type="entry name" value="Actin-like ATPase domain"/>
    <property type="match status" value="2"/>
</dbReference>
<dbReference type="PROSITE" id="PS01016">
    <property type="entry name" value="GLYCOPROTEASE"/>
    <property type="match status" value="1"/>
</dbReference>
<feature type="chain" id="PRO_1000024437" description="tRNA N6-adenosine threonylcarbamoyltransferase">
    <location>
        <begin position="1"/>
        <end position="333"/>
    </location>
</feature>
<feature type="binding site" evidence="1">
    <location>
        <position position="111"/>
    </location>
    <ligand>
        <name>Fe cation</name>
        <dbReference type="ChEBI" id="CHEBI:24875"/>
    </ligand>
</feature>
<feature type="binding site" evidence="1">
    <location>
        <position position="115"/>
    </location>
    <ligand>
        <name>Fe cation</name>
        <dbReference type="ChEBI" id="CHEBI:24875"/>
    </ligand>
</feature>
<feature type="binding site" evidence="1">
    <location>
        <begin position="134"/>
        <end position="138"/>
    </location>
    <ligand>
        <name>substrate</name>
    </ligand>
</feature>
<feature type="binding site" evidence="1">
    <location>
        <position position="167"/>
    </location>
    <ligand>
        <name>substrate</name>
    </ligand>
</feature>
<feature type="binding site" evidence="1">
    <location>
        <position position="180"/>
    </location>
    <ligand>
        <name>substrate</name>
    </ligand>
</feature>
<feature type="binding site" evidence="1">
    <location>
        <position position="272"/>
    </location>
    <ligand>
        <name>substrate</name>
    </ligand>
</feature>
<feature type="binding site" evidence="1">
    <location>
        <position position="300"/>
    </location>
    <ligand>
        <name>Fe cation</name>
        <dbReference type="ChEBI" id="CHEBI:24875"/>
    </ligand>
</feature>
<gene>
    <name evidence="1" type="primary">tsaD</name>
    <name type="synonym">gcp</name>
    <name type="ordered locus">LPC_1826</name>
</gene>
<reference key="1">
    <citation type="submission" date="2006-11" db="EMBL/GenBank/DDBJ databases">
        <title>Identification and characterization of a new conjugation/ type IVA secretion system (trb/tra) of L. pneumophila Corby localized on a mobile genomic island.</title>
        <authorList>
            <person name="Gloeckner G."/>
            <person name="Albert-Weissenberger C."/>
            <person name="Weinmann E."/>
            <person name="Jacobi S."/>
            <person name="Schunder E."/>
            <person name="Steinert M."/>
            <person name="Buchrieser C."/>
            <person name="Hacker J."/>
            <person name="Heuner K."/>
        </authorList>
    </citation>
    <scope>NUCLEOTIDE SEQUENCE [LARGE SCALE GENOMIC DNA]</scope>
    <source>
        <strain>Corby</strain>
    </source>
</reference>
<comment type="function">
    <text evidence="1">Required for the formation of a threonylcarbamoyl group on adenosine at position 37 (t(6)A37) in tRNAs that read codons beginning with adenine. Is involved in the transfer of the threonylcarbamoyl moiety of threonylcarbamoyl-AMP (TC-AMP) to the N6 group of A37, together with TsaE and TsaB. TsaD likely plays a direct catalytic role in this reaction.</text>
</comment>
<comment type="catalytic activity">
    <reaction evidence="1">
        <text>L-threonylcarbamoyladenylate + adenosine(37) in tRNA = N(6)-L-threonylcarbamoyladenosine(37) in tRNA + AMP + H(+)</text>
        <dbReference type="Rhea" id="RHEA:37059"/>
        <dbReference type="Rhea" id="RHEA-COMP:10162"/>
        <dbReference type="Rhea" id="RHEA-COMP:10163"/>
        <dbReference type="ChEBI" id="CHEBI:15378"/>
        <dbReference type="ChEBI" id="CHEBI:73682"/>
        <dbReference type="ChEBI" id="CHEBI:74411"/>
        <dbReference type="ChEBI" id="CHEBI:74418"/>
        <dbReference type="ChEBI" id="CHEBI:456215"/>
        <dbReference type="EC" id="2.3.1.234"/>
    </reaction>
</comment>
<comment type="cofactor">
    <cofactor evidence="1">
        <name>Fe(2+)</name>
        <dbReference type="ChEBI" id="CHEBI:29033"/>
    </cofactor>
    <text evidence="1">Binds 1 Fe(2+) ion per subunit.</text>
</comment>
<comment type="subcellular location">
    <subcellularLocation>
        <location evidence="1">Cytoplasm</location>
    </subcellularLocation>
</comment>
<comment type="similarity">
    <text evidence="1">Belongs to the KAE1 / TsaD family.</text>
</comment>
<keyword id="KW-0012">Acyltransferase</keyword>
<keyword id="KW-0963">Cytoplasm</keyword>
<keyword id="KW-0408">Iron</keyword>
<keyword id="KW-0479">Metal-binding</keyword>
<keyword id="KW-0808">Transferase</keyword>
<keyword id="KW-0819">tRNA processing</keyword>